<comment type="function">
    <text evidence="10 11 13 14">Involved in the homologous recombination repair (HRR) pathway of double-stranded DNA, thought to repair chromosomal fragmentation, translocations and deletions. Part of the RAD51 paralog protein complex CX3 which acts in the BRCA1-BRCA2-dependent HR pathway. Upon DNA damage, CX3 acts downstream of RAD51 recruitment; the complex binds predominantly to the intersection of the four duplex arms of the Holliday junction (HJ) and to junctions of replication forks. Involved in HJ resolution and thus in processing HR intermediates late in the DNA repair process; the function may be linked to the CX3 complex and seems to involve GEN1 during mitotic cell cycle progression. Part of a PALB2-scaffolded HR complex containing BRCA2 and RAD51C and which is thought to play a role in DNA repair by HR. Plays a role in regulating mitochondrial DNA copy number under conditions of oxidative stress in the presence of RAD51 and RAD51C.</text>
</comment>
<comment type="subunit">
    <text evidence="3 4 5 9 12 15">Interacts with RAD51C and RAD51. Part of the CX3 complex consisting of RAD51C and XRCC3; the complex has a ring-like structure arranged into a flat disk around a central channel; CX3 can interact with RAD51 in vitro. Forms a complex with FANCD2, BRCA2 and phosphorylated FANCG. Interacts with SWSAP1 and ZSWIM7; involved in homologous recombination repair. Interacts directly with PALB2 which may serve as a scaffold for a HR complex containing PALB2, BRCA2, RAD51C, RAD51 and XRCC3.</text>
</comment>
<comment type="interaction">
    <interactant intactId="EBI-2849976">
        <id>O43542</id>
    </interactant>
    <interactant intactId="EBI-1222653">
        <id>Q86YC2</id>
        <label>PALB2</label>
    </interactant>
    <organismsDiffer>false</organismsDiffer>
    <experiments>3</experiments>
</comment>
<comment type="interaction">
    <interactant intactId="EBI-2849976">
        <id>O43542</id>
    </interactant>
    <interactant intactId="EBI-297202">
        <id>Q06609</id>
        <label>RAD51</label>
    </interactant>
    <organismsDiffer>false</organismsDiffer>
    <experiments>5</experiments>
</comment>
<comment type="interaction">
    <interactant intactId="EBI-2849976">
        <id>O43542</id>
    </interactant>
    <interactant intactId="EBI-2267048">
        <id>O43502</id>
        <label>RAD51C</label>
    </interactant>
    <organismsDiffer>false</organismsDiffer>
    <experiments>12</experiments>
</comment>
<comment type="interaction">
    <interactant intactId="EBI-2849976">
        <id>O43542</id>
    </interactant>
    <interactant intactId="EBI-5281637">
        <id>Q6NVH7</id>
        <label>SWSAP1</label>
    </interactant>
    <organismsDiffer>false</organismsDiffer>
    <experiments>2</experiments>
</comment>
<comment type="subcellular location">
    <subcellularLocation>
        <location>Nucleus</location>
    </subcellularLocation>
    <subcellularLocation>
        <location>Cytoplasm</location>
    </subcellularLocation>
    <subcellularLocation>
        <location>Cytoplasm</location>
        <location>Perinuclear region</location>
    </subcellularLocation>
    <subcellularLocation>
        <location>Mitochondrion</location>
    </subcellularLocation>
    <text>Accumulates in discrete nuclear foci prior to DNA damage, and these foci persist throughout the time course of DNA repair.</text>
</comment>
<comment type="induction">
    <text evidence="11">Stress-induced increase in the mitochondrial levels is seen.</text>
</comment>
<comment type="disease" evidence="6">
    <disease id="DI-02602">
        <name>Breast cancer</name>
        <acronym>BC</acronym>
        <description>A common malignancy originating from breast epithelial tissue. Breast neoplasms can be distinguished by their histologic pattern. Invasive ductal carcinoma is by far the most common type. Breast cancer is etiologically and genetically heterogeneous. Important genetic factors have been indicated by familial occurrence and bilateral involvement. Mutations at more than one locus can be involved in different families or even in the same case.</description>
        <dbReference type="MIM" id="114480"/>
    </disease>
    <text>Disease susceptibility is associated with variants affecting the gene represented in this entry.</text>
</comment>
<comment type="disease" evidence="2">
    <disease id="DI-03126">
        <name>Melanoma, cutaneous malignant 6</name>
        <acronym>CMM6</acronym>
        <description>A malignant neoplasm of melanocytes, arising de novo or from a pre-existing benign nevus, which occurs most often in the skin but may also involve other sites.</description>
        <dbReference type="MIM" id="613972"/>
    </disease>
    <text evidence="2 7 8 16 17">Disease susceptibility may be associated with variants affecting the gene represented in this entry. Variant p.Thr341Met has been reported to be associated with an increased risk for CMM6 (PubMed:11059748). Further studies have shown that this variant is functional in homology-directed DNA repair, and the association of XRCC3 with CMM6 has not been confirmed (PubMed:12037675, PubMed:12376526, PubMed:26137085, PubMed:26922354).</text>
</comment>
<comment type="similarity">
    <text evidence="20">Belongs to the RecA family. RAD51 subfamily.</text>
</comment>
<comment type="online information" name="Atlas of Genetics and Cytogenetics in Oncology and Haematology">
    <link uri="https://atlasgeneticsoncology.org/gene/335/XRCC3"/>
</comment>
<protein>
    <recommendedName>
        <fullName>DNA repair protein XRCC3</fullName>
    </recommendedName>
    <alternativeName>
        <fullName>X-ray repair cross-complementing protein 3</fullName>
    </alternativeName>
</protein>
<keyword id="KW-0007">Acetylation</keyword>
<keyword id="KW-0067">ATP-binding</keyword>
<keyword id="KW-0963">Cytoplasm</keyword>
<keyword id="KW-0227">DNA damage</keyword>
<keyword id="KW-0233">DNA recombination</keyword>
<keyword id="KW-0234">DNA repair</keyword>
<keyword id="KW-0238">DNA-binding</keyword>
<keyword id="KW-0496">Mitochondrion</keyword>
<keyword id="KW-0547">Nucleotide-binding</keyword>
<keyword id="KW-0539">Nucleus</keyword>
<keyword id="KW-1267">Proteomics identification</keyword>
<keyword id="KW-1185">Reference proteome</keyword>
<sequence>MDLDLLDLNPRIIAAIKKAKLKSVKEVLHFSGPDLKRLTNLSSPEVWHLLRTASLHLRGSSILTALQLHQQKERFPTQHQRLSLGCPVLDALLRGGLPLDGITELAGRSSAGKTQLALQLCLAVQFPRQHGGLEAGAVYICTEDAFPHKRLQQLMAQQPRLRTDVPGELLQKLRFGSQIFIEHVADVDTLLECVNKKVPVLLSRGMARLVVIDSVAAPFRCEFDSQASAPRARHLQSLGATLRELSSAFQSPVLCINQVTEAMEEQGAAHGPLGFWDERVSPALGITWANQLLVRLLADRLREEEAALGCPARTLRVLSAPHLPPSSCSYTISAEGVRGTPGTQSH</sequence>
<dbReference type="EMBL" id="AF035586">
    <property type="protein sequence ID" value="AAC05368.1"/>
    <property type="molecule type" value="mRNA"/>
</dbReference>
<dbReference type="EMBL" id="AF037222">
    <property type="protein sequence ID" value="AAC04805.1"/>
    <property type="molecule type" value="Genomic_DNA"/>
</dbReference>
<dbReference type="EMBL" id="AF508041">
    <property type="protein sequence ID" value="AAM23015.1"/>
    <property type="molecule type" value="Genomic_DNA"/>
</dbReference>
<dbReference type="EMBL" id="BC001036">
    <property type="protein sequence ID" value="AAH01036.1"/>
    <property type="molecule type" value="mRNA"/>
</dbReference>
<dbReference type="EMBL" id="BC002949">
    <property type="protein sequence ID" value="AAH02949.1"/>
    <property type="molecule type" value="mRNA"/>
</dbReference>
<dbReference type="EMBL" id="BC011725">
    <property type="protein sequence ID" value="AAH11725.1"/>
    <property type="molecule type" value="mRNA"/>
</dbReference>
<dbReference type="CCDS" id="CCDS9984.1"/>
<dbReference type="RefSeq" id="NP_001093588.1">
    <property type="nucleotide sequence ID" value="NM_001100118.2"/>
</dbReference>
<dbReference type="RefSeq" id="NP_001093589.1">
    <property type="nucleotide sequence ID" value="NM_001100119.2"/>
</dbReference>
<dbReference type="RefSeq" id="NP_001358158.1">
    <property type="nucleotide sequence ID" value="NM_001371229.1"/>
</dbReference>
<dbReference type="RefSeq" id="NP_001358160.1">
    <property type="nucleotide sequence ID" value="NM_001371231.1"/>
</dbReference>
<dbReference type="RefSeq" id="NP_001358161.1">
    <property type="nucleotide sequence ID" value="NM_001371232.1"/>
</dbReference>
<dbReference type="RefSeq" id="NP_005423.1">
    <property type="nucleotide sequence ID" value="NM_005432.4"/>
</dbReference>
<dbReference type="RefSeq" id="XP_005268103.1">
    <property type="nucleotide sequence ID" value="XM_005268046.3"/>
</dbReference>
<dbReference type="RefSeq" id="XP_011535440.1">
    <property type="nucleotide sequence ID" value="XM_011537138.2"/>
</dbReference>
<dbReference type="RefSeq" id="XP_047287722.1">
    <property type="nucleotide sequence ID" value="XM_047431766.1"/>
</dbReference>
<dbReference type="RefSeq" id="XP_047287723.1">
    <property type="nucleotide sequence ID" value="XM_047431767.1"/>
</dbReference>
<dbReference type="RefSeq" id="XP_047287724.1">
    <property type="nucleotide sequence ID" value="XM_047431768.1"/>
</dbReference>
<dbReference type="SASBDB" id="O43542"/>
<dbReference type="SMR" id="O43542"/>
<dbReference type="BioGRID" id="113351">
    <property type="interactions" value="178"/>
</dbReference>
<dbReference type="ComplexPortal" id="CPX-2182">
    <property type="entry name" value="CX3 complex"/>
</dbReference>
<dbReference type="CORUM" id="O43542"/>
<dbReference type="DIP" id="DIP-42016N"/>
<dbReference type="FunCoup" id="O43542">
    <property type="interactions" value="1766"/>
</dbReference>
<dbReference type="IntAct" id="O43542">
    <property type="interactions" value="163"/>
</dbReference>
<dbReference type="MINT" id="O43542"/>
<dbReference type="STRING" id="9606.ENSP00000451974"/>
<dbReference type="GlyGen" id="O43542">
    <property type="glycosylation" value="1 site"/>
</dbReference>
<dbReference type="iPTMnet" id="O43542"/>
<dbReference type="PhosphoSitePlus" id="O43542"/>
<dbReference type="BioMuta" id="XRCC3"/>
<dbReference type="jPOST" id="O43542"/>
<dbReference type="MassIVE" id="O43542"/>
<dbReference type="PaxDb" id="9606-ENSP00000451974"/>
<dbReference type="PeptideAtlas" id="O43542"/>
<dbReference type="ProteomicsDB" id="49041"/>
<dbReference type="Pumba" id="O43542"/>
<dbReference type="Antibodypedia" id="14778">
    <property type="antibodies" value="604 antibodies from 35 providers"/>
</dbReference>
<dbReference type="DNASU" id="7517"/>
<dbReference type="Ensembl" id="ENST00000352127.11">
    <property type="protein sequence ID" value="ENSP00000343392.7"/>
    <property type="gene ID" value="ENSG00000126215.14"/>
</dbReference>
<dbReference type="Ensembl" id="ENST00000553264.5">
    <property type="protein sequence ID" value="ENSP00000451974.1"/>
    <property type="gene ID" value="ENSG00000126215.14"/>
</dbReference>
<dbReference type="Ensembl" id="ENST00000554913.5">
    <property type="protein sequence ID" value="ENSP00000451362.1"/>
    <property type="gene ID" value="ENSG00000126215.14"/>
</dbReference>
<dbReference type="Ensembl" id="ENST00000555055.6">
    <property type="protein sequence ID" value="ENSP00000452598.1"/>
    <property type="gene ID" value="ENSG00000126215.14"/>
</dbReference>
<dbReference type="GeneID" id="7517"/>
<dbReference type="KEGG" id="hsa:7517"/>
<dbReference type="MANE-Select" id="ENST00000555055.6">
    <property type="protein sequence ID" value="ENSP00000452598.1"/>
    <property type="RefSeq nucleotide sequence ID" value="NM_005432.4"/>
    <property type="RefSeq protein sequence ID" value="NP_005423.1"/>
</dbReference>
<dbReference type="AGR" id="HGNC:12830"/>
<dbReference type="CTD" id="7517"/>
<dbReference type="DisGeNET" id="7517"/>
<dbReference type="GeneCards" id="XRCC3"/>
<dbReference type="HGNC" id="HGNC:12830">
    <property type="gene designation" value="XRCC3"/>
</dbReference>
<dbReference type="HPA" id="ENSG00000126215">
    <property type="expression patterns" value="Low tissue specificity"/>
</dbReference>
<dbReference type="MalaCards" id="XRCC3"/>
<dbReference type="MIM" id="114480">
    <property type="type" value="phenotype"/>
</dbReference>
<dbReference type="MIM" id="600675">
    <property type="type" value="gene"/>
</dbReference>
<dbReference type="MIM" id="613972">
    <property type="type" value="phenotype"/>
</dbReference>
<dbReference type="neXtProt" id="NX_O43542"/>
<dbReference type="OpenTargets" id="ENSG00000126215"/>
<dbReference type="PharmGKB" id="PA37422"/>
<dbReference type="VEuPathDB" id="HostDB:ENSG00000126215"/>
<dbReference type="eggNOG" id="KOG1564">
    <property type="taxonomic scope" value="Eukaryota"/>
</dbReference>
<dbReference type="GeneTree" id="ENSGT00930000151053"/>
<dbReference type="HOGENOM" id="CLU_041732_1_0_1"/>
<dbReference type="InParanoid" id="O43542"/>
<dbReference type="OMA" id="WANQVTV"/>
<dbReference type="OrthoDB" id="1861185at2759"/>
<dbReference type="PAN-GO" id="O43542">
    <property type="GO annotations" value="7 GO annotations based on evolutionary models"/>
</dbReference>
<dbReference type="PhylomeDB" id="O43542"/>
<dbReference type="TreeFam" id="TF101203"/>
<dbReference type="PathwayCommons" id="O43542"/>
<dbReference type="Reactome" id="R-HSA-5685942">
    <property type="pathway name" value="HDR through Homologous Recombination (HRR)"/>
</dbReference>
<dbReference type="Reactome" id="R-HSA-5693554">
    <property type="pathway name" value="Resolution of D-loop Structures through Synthesis-Dependent Strand Annealing (SDSA)"/>
</dbReference>
<dbReference type="Reactome" id="R-HSA-5693568">
    <property type="pathway name" value="Resolution of D-loop Structures through Holliday Junction Intermediates"/>
</dbReference>
<dbReference type="Reactome" id="R-HSA-5693579">
    <property type="pathway name" value="Homologous DNA Pairing and Strand Exchange"/>
</dbReference>
<dbReference type="SignaLink" id="O43542"/>
<dbReference type="SIGNOR" id="O43542"/>
<dbReference type="BioGRID-ORCS" id="7517">
    <property type="hits" value="548 hits in 1164 CRISPR screens"/>
</dbReference>
<dbReference type="ChiTaRS" id="XRCC3">
    <property type="organism name" value="human"/>
</dbReference>
<dbReference type="GeneWiki" id="XRCC3"/>
<dbReference type="GenomeRNAi" id="7517"/>
<dbReference type="Pharos" id="O43542">
    <property type="development level" value="Tbio"/>
</dbReference>
<dbReference type="PRO" id="PR:O43542"/>
<dbReference type="Proteomes" id="UP000005640">
    <property type="component" value="Chromosome 14"/>
</dbReference>
<dbReference type="RNAct" id="O43542">
    <property type="molecule type" value="protein"/>
</dbReference>
<dbReference type="Bgee" id="ENSG00000126215">
    <property type="expression patterns" value="Expressed in mucosa of stomach and 97 other cell types or tissues"/>
</dbReference>
<dbReference type="ExpressionAtlas" id="O43542">
    <property type="expression patterns" value="baseline and differential"/>
</dbReference>
<dbReference type="GO" id="GO:0000781">
    <property type="term" value="C:chromosome, telomeric region"/>
    <property type="evidence" value="ECO:0000305"/>
    <property type="project" value="BHF-UCL"/>
</dbReference>
<dbReference type="GO" id="GO:0005737">
    <property type="term" value="C:cytoplasm"/>
    <property type="evidence" value="ECO:0000314"/>
    <property type="project" value="UniProtKB"/>
</dbReference>
<dbReference type="GO" id="GO:0005829">
    <property type="term" value="C:cytosol"/>
    <property type="evidence" value="ECO:0000314"/>
    <property type="project" value="HPA"/>
</dbReference>
<dbReference type="GO" id="GO:0005739">
    <property type="term" value="C:mitochondrion"/>
    <property type="evidence" value="ECO:0000314"/>
    <property type="project" value="UniProtKB"/>
</dbReference>
<dbReference type="GO" id="GO:0005654">
    <property type="term" value="C:nucleoplasm"/>
    <property type="evidence" value="ECO:0000314"/>
    <property type="project" value="HPA"/>
</dbReference>
<dbReference type="GO" id="GO:0005634">
    <property type="term" value="C:nucleus"/>
    <property type="evidence" value="ECO:0000314"/>
    <property type="project" value="UniProtKB"/>
</dbReference>
<dbReference type="GO" id="GO:0048471">
    <property type="term" value="C:perinuclear region of cytoplasm"/>
    <property type="evidence" value="ECO:0000314"/>
    <property type="project" value="UniProtKB"/>
</dbReference>
<dbReference type="GO" id="GO:0033065">
    <property type="term" value="C:Rad51C-XRCC3 complex"/>
    <property type="evidence" value="ECO:0000314"/>
    <property type="project" value="UniProtKB"/>
</dbReference>
<dbReference type="GO" id="GO:0005657">
    <property type="term" value="C:replication fork"/>
    <property type="evidence" value="ECO:0000314"/>
    <property type="project" value="UniProtKB"/>
</dbReference>
<dbReference type="GO" id="GO:0005524">
    <property type="term" value="F:ATP binding"/>
    <property type="evidence" value="ECO:0007669"/>
    <property type="project" value="UniProtKB-KW"/>
</dbReference>
<dbReference type="GO" id="GO:0140664">
    <property type="term" value="F:ATP-dependent DNA damage sensor activity"/>
    <property type="evidence" value="ECO:0007669"/>
    <property type="project" value="InterPro"/>
</dbReference>
<dbReference type="GO" id="GO:0003677">
    <property type="term" value="F:DNA binding"/>
    <property type="evidence" value="ECO:0007669"/>
    <property type="project" value="UniProtKB-KW"/>
</dbReference>
<dbReference type="GO" id="GO:0006974">
    <property type="term" value="P:DNA damage response"/>
    <property type="evidence" value="ECO:0000304"/>
    <property type="project" value="ProtInc"/>
</dbReference>
<dbReference type="GO" id="GO:0006310">
    <property type="term" value="P:DNA recombination"/>
    <property type="evidence" value="ECO:0000304"/>
    <property type="project" value="ProtInc"/>
</dbReference>
<dbReference type="GO" id="GO:0006281">
    <property type="term" value="P:DNA repair"/>
    <property type="evidence" value="ECO:0000316"/>
    <property type="project" value="BHF-UCL"/>
</dbReference>
<dbReference type="GO" id="GO:0000724">
    <property type="term" value="P:double-strand break repair via homologous recombination"/>
    <property type="evidence" value="ECO:0000315"/>
    <property type="project" value="UniProtKB"/>
</dbReference>
<dbReference type="GO" id="GO:0045003">
    <property type="term" value="P:double-strand break repair via synthesis-dependent strand annealing"/>
    <property type="evidence" value="ECO:0000318"/>
    <property type="project" value="GO_Central"/>
</dbReference>
<dbReference type="GO" id="GO:0036297">
    <property type="term" value="P:interstrand cross-link repair"/>
    <property type="evidence" value="ECO:0000315"/>
    <property type="project" value="ParkinsonsUK-UCL"/>
</dbReference>
<dbReference type="GO" id="GO:0090267">
    <property type="term" value="P:positive regulation of mitotic cell cycle spindle assembly checkpoint"/>
    <property type="evidence" value="ECO:0000315"/>
    <property type="project" value="UniProtKB"/>
</dbReference>
<dbReference type="GO" id="GO:0010824">
    <property type="term" value="P:regulation of centrosome duplication"/>
    <property type="evidence" value="ECO:0000315"/>
    <property type="project" value="UniProtKB"/>
</dbReference>
<dbReference type="GO" id="GO:0071140">
    <property type="term" value="P:resolution of mitotic recombination intermediates"/>
    <property type="evidence" value="ECO:0000315"/>
    <property type="project" value="UniProtKB"/>
</dbReference>
<dbReference type="GO" id="GO:0090656">
    <property type="term" value="P:t-circle formation"/>
    <property type="evidence" value="ECO:0000315"/>
    <property type="project" value="BHF-UCL"/>
</dbReference>
<dbReference type="GO" id="GO:0000722">
    <property type="term" value="P:telomere maintenance via recombination"/>
    <property type="evidence" value="ECO:0000315"/>
    <property type="project" value="BHF-UCL"/>
</dbReference>
<dbReference type="GO" id="GO:0090737">
    <property type="term" value="P:telomere maintenance via telomere trimming"/>
    <property type="evidence" value="ECO:0000316"/>
    <property type="project" value="BHF-UCL"/>
</dbReference>
<dbReference type="GO" id="GO:0090657">
    <property type="term" value="P:telomeric loop disassembly"/>
    <property type="evidence" value="ECO:0000304"/>
    <property type="project" value="BHF-UCL"/>
</dbReference>
<dbReference type="CDD" id="cd19491">
    <property type="entry name" value="XRCC3"/>
    <property type="match status" value="1"/>
</dbReference>
<dbReference type="FunFam" id="3.40.50.300:FF:001223">
    <property type="entry name" value="X-ray repair cross complementing 3"/>
    <property type="match status" value="1"/>
</dbReference>
<dbReference type="Gene3D" id="3.40.50.300">
    <property type="entry name" value="P-loop containing nucleotide triphosphate hydrolases"/>
    <property type="match status" value="1"/>
</dbReference>
<dbReference type="InterPro" id="IPR013632">
    <property type="entry name" value="DNA_recomb/repair_Rad51_C"/>
</dbReference>
<dbReference type="InterPro" id="IPR016467">
    <property type="entry name" value="DNA_recomb/repair_RecA-like"/>
</dbReference>
<dbReference type="InterPro" id="IPR027417">
    <property type="entry name" value="P-loop_NTPase"/>
</dbReference>
<dbReference type="InterPro" id="IPR020588">
    <property type="entry name" value="RecA_ATP-bd"/>
</dbReference>
<dbReference type="InterPro" id="IPR047348">
    <property type="entry name" value="XRCC3-like_C"/>
</dbReference>
<dbReference type="PANTHER" id="PTHR46487">
    <property type="entry name" value="DNA REPAIR PROTEIN XRCC3"/>
    <property type="match status" value="1"/>
</dbReference>
<dbReference type="PANTHER" id="PTHR46487:SF1">
    <property type="entry name" value="DNA REPAIR PROTEIN XRCC3"/>
    <property type="match status" value="1"/>
</dbReference>
<dbReference type="Pfam" id="PF08423">
    <property type="entry name" value="Rad51"/>
    <property type="match status" value="1"/>
</dbReference>
<dbReference type="PIRSF" id="PIRSF005856">
    <property type="entry name" value="Rad51"/>
    <property type="match status" value="1"/>
</dbReference>
<dbReference type="SUPFAM" id="SSF47789">
    <property type="entry name" value="C-terminal domain of RNA polymerase alpha subunit"/>
    <property type="match status" value="1"/>
</dbReference>
<dbReference type="SUPFAM" id="SSF52540">
    <property type="entry name" value="P-loop containing nucleoside triphosphate hydrolases"/>
    <property type="match status" value="1"/>
</dbReference>
<dbReference type="PROSITE" id="PS50162">
    <property type="entry name" value="RECA_2"/>
    <property type="match status" value="1"/>
</dbReference>
<name>XRCC3_HUMAN</name>
<gene>
    <name type="primary">XRCC3</name>
</gene>
<organism>
    <name type="scientific">Homo sapiens</name>
    <name type="common">Human</name>
    <dbReference type="NCBI Taxonomy" id="9606"/>
    <lineage>
        <taxon>Eukaryota</taxon>
        <taxon>Metazoa</taxon>
        <taxon>Chordata</taxon>
        <taxon>Craniata</taxon>
        <taxon>Vertebrata</taxon>
        <taxon>Euteleostomi</taxon>
        <taxon>Mammalia</taxon>
        <taxon>Eutheria</taxon>
        <taxon>Euarchontoglires</taxon>
        <taxon>Primates</taxon>
        <taxon>Haplorrhini</taxon>
        <taxon>Catarrhini</taxon>
        <taxon>Hominidae</taxon>
        <taxon>Homo</taxon>
    </lineage>
</organism>
<reference key="1">
    <citation type="journal article" date="1998" name="Mol. Cell">
        <title>XRCC2 and XRCC3, new human Rad51-family members, promote chromosome stability and protect against DNA cross-links and other damages.</title>
        <authorList>
            <person name="Liu N."/>
            <person name="Lamerdin J.E."/>
            <person name="Tebbs R.S."/>
            <person name="Schild D."/>
            <person name="Tucker J.D."/>
            <person name="Shen M.R."/>
            <person name="Brookman K.W."/>
            <person name="Siciliano M.J."/>
            <person name="Walter C.A."/>
            <person name="Fan W."/>
            <person name="Narayana L.S."/>
            <person name="Zhou Z.-Q."/>
            <person name="Adamson A.W."/>
            <person name="Sorensen K.J."/>
            <person name="Chen D.J."/>
            <person name="Jones N.J."/>
            <person name="Thompson L.H."/>
        </authorList>
    </citation>
    <scope>NUCLEOTIDE SEQUENCE [GENOMIC DNA / MRNA]</scope>
    <scope>VARIANT MET-241</scope>
    <source>
        <tissue>Cervix carcinoma</tissue>
    </source>
</reference>
<reference key="2">
    <citation type="submission" date="2002-04" db="EMBL/GenBank/DDBJ databases">
        <authorList>
            <consortium name="NIEHS SNPs program"/>
        </authorList>
    </citation>
    <scope>NUCLEOTIDE SEQUENCE [GENOMIC DNA]</scope>
    <scope>VARIANTS HIS-94 AND MET-241</scope>
</reference>
<reference key="3">
    <citation type="journal article" date="2004" name="Genome Res.">
        <title>The status, quality, and expansion of the NIH full-length cDNA project: the Mammalian Gene Collection (MGC).</title>
        <authorList>
            <consortium name="The MGC Project Team"/>
        </authorList>
    </citation>
    <scope>NUCLEOTIDE SEQUENCE [LARGE SCALE MRNA]</scope>
    <source>
        <tissue>Lymph</tissue>
        <tissue>Muscle</tissue>
        <tissue>Placenta</tissue>
    </source>
</reference>
<reference key="4">
    <citation type="journal article" date="2001" name="Genes Dev.">
        <title>Identification and purification of two distinct complexes containing the five RAD51 paralogs.</title>
        <authorList>
            <person name="Masson J.Y."/>
            <person name="Tarsounas M.C."/>
            <person name="Stasiak A.Z."/>
            <person name="Stasiak A."/>
            <person name="Shah R."/>
            <person name="McIlwraith M.J."/>
            <person name="Benson F.E."/>
            <person name="West S.C."/>
        </authorList>
    </citation>
    <scope>IDENTIFICATION IN THE CX3 COMPLEX WITH XRCC3</scope>
</reference>
<reference key="5">
    <citation type="journal article" date="2002" name="Hum. Mol. Genet.">
        <title>Variants in DNA double-strand break repair genes and breast cancer susceptibility.</title>
        <authorList>
            <person name="Kuschel B."/>
            <person name="Auranen A."/>
            <person name="McBride S."/>
            <person name="Novik K.L."/>
            <person name="Antoniou A."/>
            <person name="Lipscombe J.M."/>
            <person name="Day N.E."/>
            <person name="Easton D.F."/>
            <person name="Ponder B.A."/>
            <person name="Pharoah P.D."/>
            <person name="Dunning A."/>
        </authorList>
    </citation>
    <scope>INVOLVEMENT IN BC SUSCEPTIBILITY</scope>
</reference>
<reference key="6">
    <citation type="journal article" date="2002" name="J. Biol. Chem.">
        <title>RAD51C interacts with RAD51B and is central to a larger protein complex in vivo exclusive of RAD51.</title>
        <authorList>
            <person name="Miller K.A."/>
            <person name="Yoshikawa D.M."/>
            <person name="McConnell I.R."/>
            <person name="Clark R."/>
            <person name="Schild D."/>
            <person name="Albala J.S."/>
        </authorList>
    </citation>
    <scope>IDENTIFICATION IN THE CX3 COMPLEX WITH XRCC3</scope>
</reference>
<reference key="7">
    <citation type="journal article" date="2002" name="Nucleic Acids Res.">
        <title>Involvement of Rad51C in two distinct protein complexes of Rad51 paralogs in human cells.</title>
        <authorList>
            <person name="Liu N."/>
            <person name="Schild D."/>
            <person name="Thelen M.P."/>
            <person name="Thompson L.H."/>
        </authorList>
    </citation>
    <scope>INTERACTION WITH RAD51 AND RAD51C</scope>
</reference>
<reference key="8">
    <citation type="journal article" date="2004" name="Nucleic Acids Res.">
        <title>Domain mapping of the Rad51 paralog protein complexes.</title>
        <authorList>
            <person name="Miller K.A."/>
            <person name="Sawicka D."/>
            <person name="Barsky D."/>
            <person name="Albala J.S."/>
        </authorList>
    </citation>
    <scope>INTERACTION WITH RAD51C</scope>
</reference>
<reference key="9">
    <citation type="journal article" date="2004" name="Science">
        <title>RAD51C is required for Holliday junction processing in mammalian cells.</title>
        <authorList>
            <person name="Liu Y."/>
            <person name="Masson J.Y."/>
            <person name="Shah R."/>
            <person name="O'Regan P."/>
            <person name="West S.C."/>
        </authorList>
    </citation>
    <scope>FUNCTION</scope>
</reference>
<reference key="10">
    <citation type="journal article" date="2005" name="J. Cell. Biochem.">
        <title>Cellular localization of human Rad51C and regulation of ubiquitin-mediated proteolysis of Rad51.</title>
        <authorList>
            <person name="Bennett B.T."/>
            <person name="Knight K.L."/>
        </authorList>
    </citation>
    <scope>SUBCELLULAR LOCATION</scope>
</reference>
<reference key="11">
    <citation type="journal article" date="2007" name="Science">
        <title>ATM and ATR substrate analysis reveals extensive protein networks responsive to DNA damage.</title>
        <authorList>
            <person name="Matsuoka S."/>
            <person name="Ballif B.A."/>
            <person name="Smogorzewska A."/>
            <person name="McDonald E.R. III"/>
            <person name="Hurov K.E."/>
            <person name="Luo J."/>
            <person name="Bakalarski C.E."/>
            <person name="Zhao Z."/>
            <person name="Solimini N."/>
            <person name="Lerenthal Y."/>
            <person name="Shiloh Y."/>
            <person name="Gygi S.P."/>
            <person name="Elledge S.J."/>
        </authorList>
    </citation>
    <scope>IDENTIFICATION BY MASS SPECTROMETRY [LARGE SCALE ANALYSIS]</scope>
    <source>
        <tissue>Embryonic kidney</tissue>
    </source>
</reference>
<reference key="12">
    <citation type="journal article" date="2010" name="J. Biol. Chem.">
        <title>Discovery of a novel function for human Rad51: maintenance of the mitochondrial genome.</title>
        <authorList>
            <person name="Sage J.M."/>
            <person name="Gildemeister O.S."/>
            <person name="Knight K.L."/>
        </authorList>
    </citation>
    <scope>FUNCTION</scope>
    <scope>SUBCELLULAR LOCATION</scope>
    <scope>INDUCTION</scope>
</reference>
<reference key="13">
    <citation type="journal article" date="2011" name="BMC Syst. Biol.">
        <title>Initial characterization of the human central proteome.</title>
        <authorList>
            <person name="Burkard T.R."/>
            <person name="Planyavsky M."/>
            <person name="Kaupe I."/>
            <person name="Breitwieser F.P."/>
            <person name="Buerckstuemmer T."/>
            <person name="Bennett K.L."/>
            <person name="Superti-Furga G."/>
            <person name="Colinge J."/>
        </authorList>
    </citation>
    <scope>IDENTIFICATION BY MASS SPECTROMETRY [LARGE SCALE ANALYSIS]</scope>
</reference>
<reference key="14">
    <citation type="journal article" date="2011" name="J. Biol. Chem.">
        <title>hSWS1.SWSAP1 is an evolutionarily conserved complex required for efficient homologous recombination repair.</title>
        <authorList>
            <person name="Liu T."/>
            <person name="Wan L."/>
            <person name="Wu Y."/>
            <person name="Chen J."/>
            <person name="Huang J."/>
        </authorList>
    </citation>
    <scope>INTERACTION WITH SWSAP1 AND ZSWIM7</scope>
</reference>
<reference key="15">
    <citation type="journal article" date="2012" name="Proc. Natl. Acad. Sci. U.S.A.">
        <title>N-terminal acetylome analyses and functional insights of the N-terminal acetyltransferase NatB.</title>
        <authorList>
            <person name="Van Damme P."/>
            <person name="Lasa M."/>
            <person name="Polevoda B."/>
            <person name="Gazquez C."/>
            <person name="Elosegui-Artola A."/>
            <person name="Kim D.S."/>
            <person name="De Juan-Pardo E."/>
            <person name="Demeyer K."/>
            <person name="Hole K."/>
            <person name="Larrea E."/>
            <person name="Timmerman E."/>
            <person name="Prieto J."/>
            <person name="Arnesen T."/>
            <person name="Sherman F."/>
            <person name="Gevaert K."/>
            <person name="Aldabe R."/>
        </authorList>
    </citation>
    <scope>ACETYLATION [LARGE SCALE ANALYSIS] AT MET-1</scope>
    <scope>IDENTIFICATION BY MASS SPECTROMETRY [LARGE SCALE ANALYSIS]</scope>
</reference>
<reference key="16">
    <citation type="journal article" date="2013" name="J. Cell Sci.">
        <title>The RAD51 paralogs ensure cellular protection against mitotic defects and aneuploidy.</title>
        <authorList>
            <person name="Rodrigue A."/>
            <person name="Coulombe Y."/>
            <person name="Jacquet K."/>
            <person name="Gagne J.P."/>
            <person name="Roques C."/>
            <person name="Gobeil S."/>
            <person name="Poirier G."/>
            <person name="Masson J.Y."/>
        </authorList>
    </citation>
    <scope>FUNCTION IN HOLLIDAY JUNCTION RESOLUTION</scope>
</reference>
<reference key="17">
    <citation type="journal article" date="2013" name="Mol. Cell. Biol.">
        <title>Rad51 paralog complexes BCDX2 and CX3 act at different stages in the BRCA1-BRCA2-dependent homologous recombination pathway.</title>
        <authorList>
            <person name="Chun J."/>
            <person name="Buechelmaier E.S."/>
            <person name="Powell S.N."/>
        </authorList>
    </citation>
    <scope>FUNCTION OF THE CX3 COMPLEX</scope>
</reference>
<reference key="18">
    <citation type="journal article" date="2014" name="Oncogene">
        <title>Breast cancer-associated missense mutants of the PALB2 WD40 domain, which directly binds RAD51C, RAD51 and BRCA2, disrupt DNA repair.</title>
        <authorList>
            <person name="Park J.Y."/>
            <person name="Singh T.R."/>
            <person name="Nassar N."/>
            <person name="Zhang F."/>
            <person name="Freund M."/>
            <person name="Hanenberg H."/>
            <person name="Meetei A.R."/>
            <person name="Andreassen P.R."/>
        </authorList>
    </citation>
    <scope>INTERACTION WITH PALB2</scope>
    <scope>IDENTIFICATION IN A PALB2-CONTAINING HR COMPLEX</scope>
</reference>
<reference key="19">
    <citation type="journal article" date="2010" name="J. Biol. Chem.">
        <title>Ring-shaped Rad51 paralog protein complexes bind Holliday junctions and replication forks as visualized by electron microscopy.</title>
        <authorList>
            <person name="Compton S.A."/>
            <person name="Ozgur S."/>
            <person name="Griffith J.D."/>
        </authorList>
    </citation>
    <scope>ELECTRON MICROSCOPY OF THE CX3 COMPLEX</scope>
    <scope>DNA-BINDING OF THE CX3 COMPLEX</scope>
</reference>
<reference key="20">
    <citation type="journal article" date="2000" name="Cancer Res.">
        <title>A variant within the DNA repair gene XRCC3 is associated with the development of melanoma skin cancer.</title>
        <authorList>
            <person name="Winsey S.L."/>
            <person name="Haldar N.A."/>
            <person name="Marsh H.P."/>
            <person name="Bunce M."/>
            <person name="Marshall S.E."/>
            <person name="Harris A.L."/>
            <person name="Wojnarowska F."/>
            <person name="Welsh K.I."/>
        </authorList>
    </citation>
    <scope>VARIANT CMM6 MET-241</scope>
    <scope>INVOLVEMENT IN CMM6</scope>
</reference>
<reference key="21">
    <citation type="journal article" date="2002" name="Cancer Epidemiol. Biomarkers Prev.">
        <title>DNA repair gene XRCC3 241Met variant is not associated with risk of cutaneous malignant melanoma.</title>
        <authorList>
            <person name="Duan Z."/>
            <person name="Shen H."/>
            <person name="Lee J.E."/>
            <person name="Gershenwald J.E."/>
            <person name="Ross M.I."/>
            <person name="Mansfield P.F."/>
            <person name="Duvic M."/>
            <person name="Strom S.S."/>
            <person name="Spitz M.R."/>
            <person name="Wei Q."/>
        </authorList>
    </citation>
    <scope>VARIANT CMM6 MET-241</scope>
</reference>
<reference key="22">
    <citation type="journal article" date="2002" name="Oncogene">
        <title>Variant XRCC3 implicated in cancer is functional in homology-directed repair of double-strand breaks.</title>
        <authorList>
            <person name="Araujo F.D."/>
            <person name="Pierce A.J."/>
            <person name="Stark J.M."/>
            <person name="Jasin M."/>
        </authorList>
    </citation>
    <scope>CHARACTERIZATION OF VARIANT CMM6 MET-241</scope>
</reference>
<reference key="23">
    <citation type="journal article" date="2015" name="Oncol. Lett.">
        <title>XRCC3 T241M polymorphism and melanoma skin cancer risk: A meta-analysis.</title>
        <authorList>
            <person name="Fan J."/>
            <person name="Fan Y."/>
            <person name="Kang X."/>
            <person name="Zhao L."/>
        </authorList>
    </citation>
    <scope>VARIANT CMM6 MET-241</scope>
</reference>
<reference key="24">
    <citation type="journal article" date="2016" name="Arch. Dermatol. Res.">
        <title>Quantitative assessment of the influence of X-ray repair cross-complementing group 3 rs861539 polymorphism and cutaneous melanoma susceptibility.</title>
        <authorList>
            <person name="Zeng Y."/>
            <person name="Ma F."/>
            <person name="Gao W."/>
            <person name="Wang Y."/>
            <person name="Liu C."/>
        </authorList>
    </citation>
    <scope>VARIANT CMM6 MET-241</scope>
</reference>
<evidence type="ECO:0000255" key="1"/>
<evidence type="ECO:0000269" key="2">
    <source>
    </source>
</evidence>
<evidence type="ECO:0000269" key="3">
    <source>
    </source>
</evidence>
<evidence type="ECO:0000269" key="4">
    <source>
    </source>
</evidence>
<evidence type="ECO:0000269" key="5">
    <source>
    </source>
</evidence>
<evidence type="ECO:0000269" key="6">
    <source>
    </source>
</evidence>
<evidence type="ECO:0000269" key="7">
    <source>
    </source>
</evidence>
<evidence type="ECO:0000269" key="8">
    <source>
    </source>
</evidence>
<evidence type="ECO:0000269" key="9">
    <source>
    </source>
</evidence>
<evidence type="ECO:0000269" key="10">
    <source>
    </source>
</evidence>
<evidence type="ECO:0000269" key="11">
    <source>
    </source>
</evidence>
<evidence type="ECO:0000269" key="12">
    <source>
    </source>
</evidence>
<evidence type="ECO:0000269" key="13">
    <source>
    </source>
</evidence>
<evidence type="ECO:0000269" key="14">
    <source>
    </source>
</evidence>
<evidence type="ECO:0000269" key="15">
    <source>
    </source>
</evidence>
<evidence type="ECO:0000269" key="16">
    <source>
    </source>
</evidence>
<evidence type="ECO:0000269" key="17">
    <source>
    </source>
</evidence>
<evidence type="ECO:0000269" key="18">
    <source>
    </source>
</evidence>
<evidence type="ECO:0000269" key="19">
    <source ref="2"/>
</evidence>
<evidence type="ECO:0000305" key="20"/>
<evidence type="ECO:0007744" key="21">
    <source>
    </source>
</evidence>
<proteinExistence type="evidence at protein level"/>
<accession>O43542</accession>
<accession>O43568</accession>
<accession>Q9BU18</accession>
<feature type="chain" id="PRO_0000122951" description="DNA repair protein XRCC3">
    <location>
        <begin position="1"/>
        <end position="346"/>
    </location>
</feature>
<feature type="binding site" evidence="1">
    <location>
        <begin position="107"/>
        <end position="114"/>
    </location>
    <ligand>
        <name>ATP</name>
        <dbReference type="ChEBI" id="CHEBI:30616"/>
    </ligand>
</feature>
<feature type="modified residue" description="N-acetylmethionine" evidence="21">
    <location>
        <position position="1"/>
    </location>
</feature>
<feature type="sequence variant" id="VAR_020405" description="In dbSNP:rs3212057." evidence="19">
    <original>R</original>
    <variation>H</variation>
    <location>
        <position position="94"/>
    </location>
</feature>
<feature type="sequence variant" id="VAR_013006" description="In CMM6; likely benign; no effect on function in double-strand break repair via homologous recombination; able to complement DNA repair defects when expressed in XRCC3-deficients cells; dbSNP:rs861539." evidence="2 7 8 16 17 18 19">
    <original>T</original>
    <variation>M</variation>
    <location>
        <position position="241"/>
    </location>
</feature>
<feature type="sequence variant" id="VAR_029295" description="In dbSNP:rs28903080.">
    <original>G</original>
    <variation>R</variation>
    <location>
        <position position="271"/>
    </location>
</feature>
<feature type="sequence variant" id="VAR_029296" description="In dbSNP:rs28903081.">
    <original>R</original>
    <variation>H</variation>
    <location>
        <position position="302"/>
    </location>
</feature>